<dbReference type="EC" id="2.8.1.10" evidence="1"/>
<dbReference type="EMBL" id="CP001339">
    <property type="protein sequence ID" value="ACL74304.1"/>
    <property type="molecule type" value="Genomic_DNA"/>
</dbReference>
<dbReference type="RefSeq" id="WP_012639766.1">
    <property type="nucleotide sequence ID" value="NC_011901.1"/>
</dbReference>
<dbReference type="SMR" id="B8GQT0"/>
<dbReference type="STRING" id="396588.Tgr7_3236"/>
<dbReference type="KEGG" id="tgr:Tgr7_3236"/>
<dbReference type="eggNOG" id="COG2022">
    <property type="taxonomic scope" value="Bacteria"/>
</dbReference>
<dbReference type="HOGENOM" id="CLU_062233_1_1_6"/>
<dbReference type="OrthoDB" id="9805935at2"/>
<dbReference type="UniPathway" id="UPA00060"/>
<dbReference type="Proteomes" id="UP000002383">
    <property type="component" value="Chromosome"/>
</dbReference>
<dbReference type="GO" id="GO:0005737">
    <property type="term" value="C:cytoplasm"/>
    <property type="evidence" value="ECO:0007669"/>
    <property type="project" value="UniProtKB-SubCell"/>
</dbReference>
<dbReference type="GO" id="GO:1990107">
    <property type="term" value="F:thiazole synthase activity"/>
    <property type="evidence" value="ECO:0007669"/>
    <property type="project" value="UniProtKB-EC"/>
</dbReference>
<dbReference type="GO" id="GO:0009229">
    <property type="term" value="P:thiamine diphosphate biosynthetic process"/>
    <property type="evidence" value="ECO:0007669"/>
    <property type="project" value="UniProtKB-UniRule"/>
</dbReference>
<dbReference type="CDD" id="cd04728">
    <property type="entry name" value="ThiG"/>
    <property type="match status" value="1"/>
</dbReference>
<dbReference type="FunFam" id="3.20.20.70:FF:000049">
    <property type="entry name" value="Thiazole synthase"/>
    <property type="match status" value="1"/>
</dbReference>
<dbReference type="Gene3D" id="3.20.20.70">
    <property type="entry name" value="Aldolase class I"/>
    <property type="match status" value="1"/>
</dbReference>
<dbReference type="HAMAP" id="MF_00443">
    <property type="entry name" value="ThiG"/>
    <property type="match status" value="1"/>
</dbReference>
<dbReference type="InterPro" id="IPR013785">
    <property type="entry name" value="Aldolase_TIM"/>
</dbReference>
<dbReference type="InterPro" id="IPR033983">
    <property type="entry name" value="Thiazole_synthase_ThiG"/>
</dbReference>
<dbReference type="InterPro" id="IPR008867">
    <property type="entry name" value="ThiG"/>
</dbReference>
<dbReference type="PANTHER" id="PTHR34266">
    <property type="entry name" value="THIAZOLE SYNTHASE"/>
    <property type="match status" value="1"/>
</dbReference>
<dbReference type="PANTHER" id="PTHR34266:SF2">
    <property type="entry name" value="THIAZOLE SYNTHASE"/>
    <property type="match status" value="1"/>
</dbReference>
<dbReference type="Pfam" id="PF05690">
    <property type="entry name" value="ThiG"/>
    <property type="match status" value="1"/>
</dbReference>
<dbReference type="SUPFAM" id="SSF110399">
    <property type="entry name" value="ThiG-like"/>
    <property type="match status" value="1"/>
</dbReference>
<sequence length="264" mass="28218">MSQTETQDLLTIAGRDYRSRLLVGTGKYKDLDETRAAVEASGAEIITVAIRRTNIGQNPGEPNLLDVLPPDRYTYLPNTAGCYSAEDAVRTCRLARELLDGHTLVKLEVLGDEKTLYPDVVQTLAAAETLVKDGFQVMVYTSDDPILAKRLEEIGCVAVMPLAAPIGSGLGIQNRYNILEIVENAQVPILVDAGVGTASDAAIAMELGCDGVLMNTAIAAAKNPVLMASAMKKAIEAGREAFLAGRMPRKRYASASSPVEGTFF</sequence>
<evidence type="ECO:0000255" key="1">
    <source>
        <dbReference type="HAMAP-Rule" id="MF_00443"/>
    </source>
</evidence>
<reference key="1">
    <citation type="journal article" date="2011" name="Stand. Genomic Sci.">
        <title>Complete genome sequence of 'Thioalkalivibrio sulfidophilus' HL-EbGr7.</title>
        <authorList>
            <person name="Muyzer G."/>
            <person name="Sorokin D.Y."/>
            <person name="Mavromatis K."/>
            <person name="Lapidus A."/>
            <person name="Clum A."/>
            <person name="Ivanova N."/>
            <person name="Pati A."/>
            <person name="d'Haeseleer P."/>
            <person name="Woyke T."/>
            <person name="Kyrpides N.C."/>
        </authorList>
    </citation>
    <scope>NUCLEOTIDE SEQUENCE [LARGE SCALE GENOMIC DNA]</scope>
    <source>
        <strain>HL-EbGR7</strain>
    </source>
</reference>
<keyword id="KW-0963">Cytoplasm</keyword>
<keyword id="KW-1185">Reference proteome</keyword>
<keyword id="KW-0704">Schiff base</keyword>
<keyword id="KW-0784">Thiamine biosynthesis</keyword>
<keyword id="KW-0808">Transferase</keyword>
<proteinExistence type="inferred from homology"/>
<protein>
    <recommendedName>
        <fullName evidence="1">Thiazole synthase</fullName>
        <ecNumber evidence="1">2.8.1.10</ecNumber>
    </recommendedName>
</protein>
<name>THIG_THISH</name>
<comment type="function">
    <text evidence="1">Catalyzes the rearrangement of 1-deoxy-D-xylulose 5-phosphate (DXP) to produce the thiazole phosphate moiety of thiamine. Sulfur is provided by the thiocarboxylate moiety of the carrier protein ThiS. In vitro, sulfur can be provided by H(2)S.</text>
</comment>
<comment type="catalytic activity">
    <reaction evidence="1">
        <text>[ThiS sulfur-carrier protein]-C-terminal-Gly-aminoethanethioate + 2-iminoacetate + 1-deoxy-D-xylulose 5-phosphate = [ThiS sulfur-carrier protein]-C-terminal Gly-Gly + 2-[(2R,5Z)-2-carboxy-4-methylthiazol-5(2H)-ylidene]ethyl phosphate + 2 H2O + H(+)</text>
        <dbReference type="Rhea" id="RHEA:26297"/>
        <dbReference type="Rhea" id="RHEA-COMP:12909"/>
        <dbReference type="Rhea" id="RHEA-COMP:19908"/>
        <dbReference type="ChEBI" id="CHEBI:15377"/>
        <dbReference type="ChEBI" id="CHEBI:15378"/>
        <dbReference type="ChEBI" id="CHEBI:57792"/>
        <dbReference type="ChEBI" id="CHEBI:62899"/>
        <dbReference type="ChEBI" id="CHEBI:77846"/>
        <dbReference type="ChEBI" id="CHEBI:90778"/>
        <dbReference type="ChEBI" id="CHEBI:232372"/>
        <dbReference type="EC" id="2.8.1.10"/>
    </reaction>
</comment>
<comment type="pathway">
    <text evidence="1">Cofactor biosynthesis; thiamine diphosphate biosynthesis.</text>
</comment>
<comment type="subunit">
    <text evidence="1">Homotetramer. Forms heterodimers with either ThiH or ThiS.</text>
</comment>
<comment type="subcellular location">
    <subcellularLocation>
        <location evidence="1">Cytoplasm</location>
    </subcellularLocation>
</comment>
<comment type="similarity">
    <text evidence="1">Belongs to the ThiG family.</text>
</comment>
<accession>B8GQT0</accession>
<gene>
    <name evidence="1" type="primary">thiG</name>
    <name type="ordered locus">Tgr7_3236</name>
</gene>
<feature type="chain" id="PRO_1000196910" description="Thiazole synthase">
    <location>
        <begin position="1"/>
        <end position="264"/>
    </location>
</feature>
<feature type="active site" description="Schiff-base intermediate with DXP" evidence="1">
    <location>
        <position position="106"/>
    </location>
</feature>
<feature type="binding site" evidence="1">
    <location>
        <position position="167"/>
    </location>
    <ligand>
        <name>1-deoxy-D-xylulose 5-phosphate</name>
        <dbReference type="ChEBI" id="CHEBI:57792"/>
    </ligand>
</feature>
<feature type="binding site" evidence="1">
    <location>
        <begin position="193"/>
        <end position="194"/>
    </location>
    <ligand>
        <name>1-deoxy-D-xylulose 5-phosphate</name>
        <dbReference type="ChEBI" id="CHEBI:57792"/>
    </ligand>
</feature>
<feature type="binding site" evidence="1">
    <location>
        <begin position="215"/>
        <end position="216"/>
    </location>
    <ligand>
        <name>1-deoxy-D-xylulose 5-phosphate</name>
        <dbReference type="ChEBI" id="CHEBI:57792"/>
    </ligand>
</feature>
<organism>
    <name type="scientific">Thioalkalivibrio sulfidiphilus (strain HL-EbGR7)</name>
    <dbReference type="NCBI Taxonomy" id="396588"/>
    <lineage>
        <taxon>Bacteria</taxon>
        <taxon>Pseudomonadati</taxon>
        <taxon>Pseudomonadota</taxon>
        <taxon>Gammaproteobacteria</taxon>
        <taxon>Chromatiales</taxon>
        <taxon>Ectothiorhodospiraceae</taxon>
        <taxon>Thioalkalivibrio</taxon>
    </lineage>
</organism>